<keyword id="KW-0056">Arginine metabolism</keyword>
<keyword id="KW-0238">DNA-binding</keyword>
<keyword id="KW-0539">Nucleus</keyword>
<keyword id="KW-1185">Reference proteome</keyword>
<keyword id="KW-0804">Transcription</keyword>
<keyword id="KW-0805">Transcription regulation</keyword>
<feature type="chain" id="PRO_0000199438" description="Arginine metabolism regulation protein I">
    <location>
        <begin position="1"/>
        <end position="177"/>
    </location>
</feature>
<feature type="domain" description="MADS-box" evidence="1">
    <location>
        <begin position="80"/>
        <end position="134"/>
    </location>
</feature>
<feature type="region of interest" description="Disordered" evidence="2">
    <location>
        <begin position="1"/>
        <end position="82"/>
    </location>
</feature>
<feature type="region of interest" description="Disordered" evidence="2">
    <location>
        <begin position="157"/>
        <end position="177"/>
    </location>
</feature>
<feature type="compositionally biased region" description="Polar residues" evidence="2">
    <location>
        <begin position="1"/>
        <end position="12"/>
    </location>
</feature>
<feature type="compositionally biased region" description="Acidic residues" evidence="2">
    <location>
        <begin position="40"/>
        <end position="53"/>
    </location>
</feature>
<feature type="compositionally biased region" description="Low complexity" evidence="2">
    <location>
        <begin position="56"/>
        <end position="67"/>
    </location>
</feature>
<feature type="compositionally biased region" description="Polar residues" evidence="2">
    <location>
        <begin position="158"/>
        <end position="177"/>
    </location>
</feature>
<feature type="mutagenesis site" description="Decreases the physical interaction with ARG82. Abolishes the physical interaction with ARG82 and impairs function; when associated with D-95 and R-103." evidence="3">
    <original>R</original>
    <variation>G</variation>
    <location>
        <position position="94"/>
    </location>
</feature>
<feature type="mutagenesis site" description="Decreases the physical interaction with ARG82. Abolishes the physical interaction with ARG82 and impairs function; when associated with G-94 and R-103." evidence="3">
    <original>H</original>
    <variation>G</variation>
    <location>
        <position position="95"/>
    </location>
</feature>
<feature type="mutagenesis site" description="Abolishes the physical interaction with ARG82 and impairs function; when associated with G-94 and D-95.">
    <original>H</original>
    <variation>R</variation>
    <location>
        <position position="103"/>
    </location>
</feature>
<feature type="mutagenesis site" description="Decreases the physical interaction with ARG82." evidence="3">
    <original>A</original>
    <variation>T</variation>
    <location>
        <position position="109"/>
    </location>
</feature>
<feature type="mutagenesis site" description="Decreases the physical interaction with ARG82." evidence="3">
    <original>L</original>
    <variation>H</variation>
    <location>
        <position position="115"/>
    </location>
</feature>
<feature type="mutagenesis site" description="Decreases the physical interaction with ARG82." evidence="3">
    <original>G</original>
    <variation>D</variation>
    <location>
        <position position="148"/>
    </location>
</feature>
<protein>
    <recommendedName>
        <fullName>Arginine metabolism regulation protein I</fullName>
    </recommendedName>
    <alternativeName>
        <fullName>Arginine-requiring protein 80</fullName>
    </alternativeName>
</protein>
<gene>
    <name type="primary">ARG80</name>
    <name type="synonym">ARGR1</name>
    <name type="ordered locus">YMR042W</name>
    <name type="ORF">YM9532.07</name>
</gene>
<organism>
    <name type="scientific">Saccharomyces cerevisiae (strain ATCC 204508 / S288c)</name>
    <name type="common">Baker's yeast</name>
    <dbReference type="NCBI Taxonomy" id="559292"/>
    <lineage>
        <taxon>Eukaryota</taxon>
        <taxon>Fungi</taxon>
        <taxon>Dikarya</taxon>
        <taxon>Ascomycota</taxon>
        <taxon>Saccharomycotina</taxon>
        <taxon>Saccharomycetes</taxon>
        <taxon>Saccharomycetales</taxon>
        <taxon>Saccharomycetaceae</taxon>
        <taxon>Saccharomyces</taxon>
    </lineage>
</organism>
<name>ARGR1_YEAST</name>
<evidence type="ECO:0000255" key="1">
    <source>
        <dbReference type="PROSITE-ProRule" id="PRU00251"/>
    </source>
</evidence>
<evidence type="ECO:0000256" key="2">
    <source>
        <dbReference type="SAM" id="MobiDB-lite"/>
    </source>
</evidence>
<evidence type="ECO:0000269" key="3">
    <source>
    </source>
</evidence>
<evidence type="ECO:0000269" key="4">
    <source>
    </source>
</evidence>
<evidence type="ECO:0000269" key="5">
    <source>
    </source>
</evidence>
<evidence type="ECO:0000269" key="6">
    <source>
    </source>
</evidence>
<evidence type="ECO:0000269" key="7">
    <source>
    </source>
</evidence>
<sequence length="177" mass="19488">MTSNSDGSSTSPVEKPITGDVETNEPTKPIRRLSTPSPEQDQEGDFDEEDDDDKFSVSTSTPTPTITKTKDSSDTSTVTRRKQPIRYIENKTRRHVTFSKRRHGIMKKAYELSVLTGANILLLILANSGLVYTFTTPKLEPVVREDEGKSLIRACINASDTPDATDTSPAQEQSPAN</sequence>
<reference key="1">
    <citation type="journal article" date="1987" name="Mol. Gen. Genet.">
        <title>Characterization of two genes, ARGRI and ARGRIII required for specific regulation of arginine metabolism in yeast.</title>
        <authorList>
            <person name="Dubois E."/>
            <person name="Bercy J."/>
            <person name="Messenguy F."/>
        </authorList>
    </citation>
    <scope>NUCLEOTIDE SEQUENCE [GENOMIC DNA]</scope>
    <scope>FUNCTION</scope>
</reference>
<reference key="2">
    <citation type="journal article" date="1997" name="Nature">
        <title>The nucleotide sequence of Saccharomyces cerevisiae chromosome XIII.</title>
        <authorList>
            <person name="Bowman S."/>
            <person name="Churcher C.M."/>
            <person name="Badcock K."/>
            <person name="Brown D."/>
            <person name="Chillingworth T."/>
            <person name="Connor R."/>
            <person name="Dedman K."/>
            <person name="Devlin K."/>
            <person name="Gentles S."/>
            <person name="Hamlin N."/>
            <person name="Hunt S."/>
            <person name="Jagels K."/>
            <person name="Lye G."/>
            <person name="Moule S."/>
            <person name="Odell C."/>
            <person name="Pearson D."/>
            <person name="Rajandream M.A."/>
            <person name="Rice P."/>
            <person name="Skelton J."/>
            <person name="Walsh S.V."/>
            <person name="Whitehead S."/>
            <person name="Barrell B.G."/>
        </authorList>
    </citation>
    <scope>NUCLEOTIDE SEQUENCE [LARGE SCALE GENOMIC DNA]</scope>
    <source>
        <strain>ATCC 204508 / S288c</strain>
    </source>
</reference>
<reference key="3">
    <citation type="journal article" date="2014" name="G3 (Bethesda)">
        <title>The reference genome sequence of Saccharomyces cerevisiae: Then and now.</title>
        <authorList>
            <person name="Engel S.R."/>
            <person name="Dietrich F.S."/>
            <person name="Fisk D.G."/>
            <person name="Binkley G."/>
            <person name="Balakrishnan R."/>
            <person name="Costanzo M.C."/>
            <person name="Dwight S.S."/>
            <person name="Hitz B.C."/>
            <person name="Karra K."/>
            <person name="Nash R.S."/>
            <person name="Weng S."/>
            <person name="Wong E.D."/>
            <person name="Lloyd P."/>
            <person name="Skrzypek M.S."/>
            <person name="Miyasato S.R."/>
            <person name="Simison M."/>
            <person name="Cherry J.M."/>
        </authorList>
    </citation>
    <scope>GENOME REANNOTATION</scope>
    <source>
        <strain>ATCC 204508 / S288c</strain>
    </source>
</reference>
<reference key="4">
    <citation type="journal article" date="2007" name="Genome Res.">
        <title>Approaching a complete repository of sequence-verified protein-encoding clones for Saccharomyces cerevisiae.</title>
        <authorList>
            <person name="Hu Y."/>
            <person name="Rolfs A."/>
            <person name="Bhullar B."/>
            <person name="Murthy T.V.S."/>
            <person name="Zhu C."/>
            <person name="Berger M.F."/>
            <person name="Camargo A.A."/>
            <person name="Kelley F."/>
            <person name="McCarron S."/>
            <person name="Jepson D."/>
            <person name="Richardson A."/>
            <person name="Raphael J."/>
            <person name="Moreira D."/>
            <person name="Taycher E."/>
            <person name="Zuo D."/>
            <person name="Mohr S."/>
            <person name="Kane M.F."/>
            <person name="Williamson J."/>
            <person name="Simpson A.J.G."/>
            <person name="Bulyk M.L."/>
            <person name="Harlow E."/>
            <person name="Marsischky G."/>
            <person name="Kolodner R.D."/>
            <person name="LaBaer J."/>
        </authorList>
    </citation>
    <scope>NUCLEOTIDE SEQUENCE [GENOMIC DNA]</scope>
    <source>
        <strain>ATCC 204508 / S288c</strain>
    </source>
</reference>
<reference key="5">
    <citation type="journal article" date="1987" name="Gene">
        <title>Regulation of arginine metabolism in Saccharomyces cerevisiae: expression of the three ARGR regulatory genes and cellular localization of their products.</title>
        <authorList>
            <person name="Bercy J."/>
            <person name="Dubois E."/>
            <person name="Messenguy F."/>
        </authorList>
    </citation>
    <scope>SUBCELLULAR LOCATION</scope>
</reference>
<reference key="6">
    <citation type="journal article" date="1990" name="Mol. Gen. Genet.">
        <title>Functional analysis of ARGRI and ARGRIII regulatory proteins involved in the regulation of arginine metabolism in Saccharomyces cerevisiae.</title>
        <authorList>
            <person name="Qiu H.F."/>
            <person name="Dubois E."/>
            <person name="Broen P."/>
            <person name="Messenguy F."/>
        </authorList>
    </citation>
    <scope>FUNCTION</scope>
</reference>
<reference key="7">
    <citation type="journal article" date="1991" name="Mol. Cell. Biol.">
        <title>In vitro studies of the binding of the ARGR proteins to the ARG5,6 promoter.</title>
        <authorList>
            <person name="Dubois E."/>
            <person name="Messenguy F."/>
        </authorList>
    </citation>
    <scope>DNA-BINDING</scope>
</reference>
<reference key="8">
    <citation type="journal article" date="1991" name="Mol. Cell. Biol.">
        <title>Determination of the DNA-binding sequences of ARGR proteins to arginine anabolic and catabolic promoters.</title>
        <authorList>
            <person name="Messenguy F."/>
            <person name="Dubois E."/>
            <person name="Boonchird C."/>
        </authorList>
    </citation>
    <scope>DNA-BINDING</scope>
</reference>
<reference key="9">
    <citation type="journal article" date="2000" name="Mol. Microbiol.">
        <title>Recruitment of the yeast MADS-box proteins, ArgRI and Mcm1 by the pleiotropic factor ArgRIII is required for their stability.</title>
        <authorList>
            <person name="El Bakkoury M."/>
            <person name="Dubois E."/>
            <person name="Messenguy F."/>
        </authorList>
    </citation>
    <scope>INTERACTION WITH ARG81 AND ARG82</scope>
    <scope>FUNCTION</scope>
    <scope>MUTAGENESIS OF ARG-94; HIS-95; ALA-109; LEU-115 AND GLY-148</scope>
</reference>
<reference key="10">
    <citation type="journal article" date="2003" name="Nature">
        <title>Global analysis of protein localization in budding yeast.</title>
        <authorList>
            <person name="Huh W.-K."/>
            <person name="Falvo J.V."/>
            <person name="Gerke L.C."/>
            <person name="Carroll A.S."/>
            <person name="Howson R.W."/>
            <person name="Weissman J.S."/>
            <person name="O'Shea E.K."/>
        </authorList>
    </citation>
    <scope>SUBCELLULAR LOCATION [LARGE SCALE ANALYSIS]</scope>
</reference>
<comment type="function">
    <text evidence="3 5 6">With ARG81, ARG82 and MCM1, coordinates the expression of arginine anabolic and catabolic genes in response to arginine.</text>
</comment>
<comment type="subunit">
    <text evidence="3">Interacts with ARG81 and ARG82.</text>
</comment>
<comment type="subcellular location">
    <subcellularLocation>
        <location evidence="1 4 7">Nucleus</location>
    </subcellularLocation>
</comment>
<accession>P07249</accession>
<accession>D6VZL7</accession>
<proteinExistence type="evidence at protein level"/>
<dbReference type="EMBL" id="X05327">
    <property type="protein sequence ID" value="CAA28944.1"/>
    <property type="molecule type" value="Genomic_DNA"/>
</dbReference>
<dbReference type="EMBL" id="Z48502">
    <property type="protein sequence ID" value="CAA88408.1"/>
    <property type="molecule type" value="Genomic_DNA"/>
</dbReference>
<dbReference type="EMBL" id="AY692845">
    <property type="protein sequence ID" value="AAT92864.1"/>
    <property type="molecule type" value="Genomic_DNA"/>
</dbReference>
<dbReference type="EMBL" id="BK006946">
    <property type="protein sequence ID" value="DAA09941.1"/>
    <property type="molecule type" value="Genomic_DNA"/>
</dbReference>
<dbReference type="PIR" id="S05822">
    <property type="entry name" value="RGBYGI"/>
</dbReference>
<dbReference type="RefSeq" id="NP_013756.1">
    <property type="nucleotide sequence ID" value="NM_001182539.1"/>
</dbReference>
<dbReference type="SMR" id="P07249"/>
<dbReference type="BioGRID" id="35215">
    <property type="interactions" value="90"/>
</dbReference>
<dbReference type="ComplexPortal" id="CPX-1152">
    <property type="entry name" value="ARGR-MCM1 transcription regulation complex"/>
</dbReference>
<dbReference type="DIP" id="DIP-2404N"/>
<dbReference type="FunCoup" id="P07249">
    <property type="interactions" value="446"/>
</dbReference>
<dbReference type="IntAct" id="P07249">
    <property type="interactions" value="2"/>
</dbReference>
<dbReference type="STRING" id="4932.YMR042W"/>
<dbReference type="iPTMnet" id="P07249"/>
<dbReference type="PaxDb" id="4932-YMR042W"/>
<dbReference type="PeptideAtlas" id="P07249"/>
<dbReference type="EnsemblFungi" id="YMR042W_mRNA">
    <property type="protein sequence ID" value="YMR042W"/>
    <property type="gene ID" value="YMR042W"/>
</dbReference>
<dbReference type="GeneID" id="855059"/>
<dbReference type="KEGG" id="sce:YMR042W"/>
<dbReference type="AGR" id="SGD:S000004645"/>
<dbReference type="SGD" id="S000004645">
    <property type="gene designation" value="ARG80"/>
</dbReference>
<dbReference type="VEuPathDB" id="FungiDB:YMR042W"/>
<dbReference type="eggNOG" id="KOG0015">
    <property type="taxonomic scope" value="Eukaryota"/>
</dbReference>
<dbReference type="GeneTree" id="ENSGT00400000022158"/>
<dbReference type="HOGENOM" id="CLU_130026_0_0_1"/>
<dbReference type="InParanoid" id="P07249"/>
<dbReference type="OMA" id="ANSGLVX"/>
<dbReference type="OrthoDB" id="2284405at2759"/>
<dbReference type="BioCyc" id="YEAST:G3O-32747-MONOMER"/>
<dbReference type="BioGRID-ORCS" id="855059">
    <property type="hits" value="1 hit in 10 CRISPR screens"/>
</dbReference>
<dbReference type="PRO" id="PR:P07249"/>
<dbReference type="Proteomes" id="UP000002311">
    <property type="component" value="Chromosome XIII"/>
</dbReference>
<dbReference type="RNAct" id="P07249">
    <property type="molecule type" value="protein"/>
</dbReference>
<dbReference type="GO" id="GO:0005634">
    <property type="term" value="C:nucleus"/>
    <property type="evidence" value="ECO:0000314"/>
    <property type="project" value="SGD"/>
</dbReference>
<dbReference type="GO" id="GO:0090575">
    <property type="term" value="C:RNA polymerase II transcription regulator complex"/>
    <property type="evidence" value="ECO:0000303"/>
    <property type="project" value="ComplexPortal"/>
</dbReference>
<dbReference type="GO" id="GO:0000987">
    <property type="term" value="F:cis-regulatory region sequence-specific DNA binding"/>
    <property type="evidence" value="ECO:0000314"/>
    <property type="project" value="SGD"/>
</dbReference>
<dbReference type="GO" id="GO:0000981">
    <property type="term" value="F:DNA-binding transcription factor activity, RNA polymerase II-specific"/>
    <property type="evidence" value="ECO:0000318"/>
    <property type="project" value="GO_Central"/>
</dbReference>
<dbReference type="GO" id="GO:0046983">
    <property type="term" value="F:protein dimerization activity"/>
    <property type="evidence" value="ECO:0007669"/>
    <property type="project" value="InterPro"/>
</dbReference>
<dbReference type="GO" id="GO:0000978">
    <property type="term" value="F:RNA polymerase II cis-regulatory region sequence-specific DNA binding"/>
    <property type="evidence" value="ECO:0000318"/>
    <property type="project" value="GO_Central"/>
</dbReference>
<dbReference type="GO" id="GO:0006525">
    <property type="term" value="P:arginine metabolic process"/>
    <property type="evidence" value="ECO:0007669"/>
    <property type="project" value="UniProtKB-KW"/>
</dbReference>
<dbReference type="GO" id="GO:0045944">
    <property type="term" value="P:positive regulation of transcription by RNA polymerase II"/>
    <property type="evidence" value="ECO:0000315"/>
    <property type="project" value="SGD"/>
</dbReference>
<dbReference type="GO" id="GO:1900079">
    <property type="term" value="P:regulation of arginine biosynthetic process"/>
    <property type="evidence" value="ECO:0000315"/>
    <property type="project" value="SGD"/>
</dbReference>
<dbReference type="GO" id="GO:1900081">
    <property type="term" value="P:regulation of arginine catabolic process"/>
    <property type="evidence" value="ECO:0000315"/>
    <property type="project" value="SGD"/>
</dbReference>
<dbReference type="GO" id="GO:0000821">
    <property type="term" value="P:regulation of arginine metabolic process"/>
    <property type="evidence" value="ECO:0000303"/>
    <property type="project" value="ComplexPortal"/>
</dbReference>
<dbReference type="CDD" id="cd00266">
    <property type="entry name" value="MADS_SRF_like"/>
    <property type="match status" value="1"/>
</dbReference>
<dbReference type="FunFam" id="3.40.1810.10:FF:000002">
    <property type="entry name" value="Serum response factor b"/>
    <property type="match status" value="1"/>
</dbReference>
<dbReference type="Gene3D" id="3.40.1810.10">
    <property type="entry name" value="Transcription factor, MADS-box"/>
    <property type="match status" value="1"/>
</dbReference>
<dbReference type="InterPro" id="IPR050142">
    <property type="entry name" value="MADS-box/MEF2_TF"/>
</dbReference>
<dbReference type="InterPro" id="IPR033897">
    <property type="entry name" value="SRF-like_MADS-box"/>
</dbReference>
<dbReference type="InterPro" id="IPR002100">
    <property type="entry name" value="TF_MADSbox"/>
</dbReference>
<dbReference type="InterPro" id="IPR036879">
    <property type="entry name" value="TF_MADSbox_sf"/>
</dbReference>
<dbReference type="PANTHER" id="PTHR48019">
    <property type="entry name" value="SERUM RESPONSE FACTOR HOMOLOG"/>
    <property type="match status" value="1"/>
</dbReference>
<dbReference type="Pfam" id="PF00319">
    <property type="entry name" value="SRF-TF"/>
    <property type="match status" value="1"/>
</dbReference>
<dbReference type="PRINTS" id="PR00404">
    <property type="entry name" value="MADSDOMAIN"/>
</dbReference>
<dbReference type="SMART" id="SM00432">
    <property type="entry name" value="MADS"/>
    <property type="match status" value="1"/>
</dbReference>
<dbReference type="SUPFAM" id="SSF55455">
    <property type="entry name" value="SRF-like"/>
    <property type="match status" value="1"/>
</dbReference>
<dbReference type="PROSITE" id="PS00350">
    <property type="entry name" value="MADS_BOX_1"/>
    <property type="match status" value="1"/>
</dbReference>
<dbReference type="PROSITE" id="PS50066">
    <property type="entry name" value="MADS_BOX_2"/>
    <property type="match status" value="1"/>
</dbReference>